<evidence type="ECO:0000255" key="1">
    <source>
        <dbReference type="HAMAP-Rule" id="MF_00693"/>
    </source>
</evidence>
<proteinExistence type="inferred from homology"/>
<keyword id="KW-0963">Cytoplasm</keyword>
<keyword id="KW-0238">DNA-binding</keyword>
<keyword id="KW-1185">Reference proteome</keyword>
<keyword id="KW-0804">Transcription</keyword>
<keyword id="KW-0805">Transcription regulation</keyword>
<reference key="1">
    <citation type="journal article" date="2007" name="Proc. Natl. Acad. Sci. U.S.A.">
        <title>Deep-sea vent epsilon-proteobacterial genomes provide insights into emergence of pathogens.</title>
        <authorList>
            <person name="Nakagawa S."/>
            <person name="Takaki Y."/>
            <person name="Shimamura S."/>
            <person name="Reysenbach A.-L."/>
            <person name="Takai K."/>
            <person name="Horikoshi K."/>
        </authorList>
    </citation>
    <scope>NUCLEOTIDE SEQUENCE [LARGE SCALE GENOMIC DNA]</scope>
    <source>
        <strain>SB155-2</strain>
    </source>
</reference>
<comment type="subcellular location">
    <subcellularLocation>
        <location evidence="1">Cytoplasm</location>
    </subcellularLocation>
</comment>
<comment type="similarity">
    <text evidence="1">Belongs to the TACO1 family.</text>
</comment>
<sequence length="237" mass="25753">MAGHNKWSKVKHIKAKEDAKKGKVFTKAVRDIMTAVRDGGPNPDTNAALRLAIERAKAVSMPQDNIKRAIDKASGNLPGVKYEEITYEGYGPGGVAIMVECLTDNKNRTVASVRHAFSKSGGSLGTSGSVSWMFEKKGVITVERDENEDAIMEAALESGANDILEFDEVLVIETDPADFNQVLEAVEKAGAKILESSVGLVATNEIDVDDATAEKVERLIDMLEENDDVQNVYHNMK</sequence>
<dbReference type="EMBL" id="AP009178">
    <property type="protein sequence ID" value="BAF69674.1"/>
    <property type="molecule type" value="Genomic_DNA"/>
</dbReference>
<dbReference type="RefSeq" id="WP_012081937.1">
    <property type="nucleotide sequence ID" value="NC_009662.1"/>
</dbReference>
<dbReference type="SMR" id="A6Q2G5"/>
<dbReference type="FunCoup" id="A6Q2G5">
    <property type="interactions" value="449"/>
</dbReference>
<dbReference type="STRING" id="387092.NIS_0560"/>
<dbReference type="KEGG" id="nis:NIS_0560"/>
<dbReference type="eggNOG" id="COG0217">
    <property type="taxonomic scope" value="Bacteria"/>
</dbReference>
<dbReference type="HOGENOM" id="CLU_062974_2_2_7"/>
<dbReference type="InParanoid" id="A6Q2G5"/>
<dbReference type="OrthoDB" id="9781053at2"/>
<dbReference type="Proteomes" id="UP000001118">
    <property type="component" value="Chromosome"/>
</dbReference>
<dbReference type="GO" id="GO:0005829">
    <property type="term" value="C:cytosol"/>
    <property type="evidence" value="ECO:0007669"/>
    <property type="project" value="TreeGrafter"/>
</dbReference>
<dbReference type="GO" id="GO:0003677">
    <property type="term" value="F:DNA binding"/>
    <property type="evidence" value="ECO:0007669"/>
    <property type="project" value="UniProtKB-UniRule"/>
</dbReference>
<dbReference type="GO" id="GO:0006355">
    <property type="term" value="P:regulation of DNA-templated transcription"/>
    <property type="evidence" value="ECO:0007669"/>
    <property type="project" value="UniProtKB-UniRule"/>
</dbReference>
<dbReference type="FunFam" id="1.10.10.200:FF:000002">
    <property type="entry name" value="Probable transcriptional regulatory protein CLM62_37755"/>
    <property type="match status" value="1"/>
</dbReference>
<dbReference type="Gene3D" id="1.10.10.200">
    <property type="match status" value="1"/>
</dbReference>
<dbReference type="Gene3D" id="3.30.70.980">
    <property type="match status" value="2"/>
</dbReference>
<dbReference type="HAMAP" id="MF_00693">
    <property type="entry name" value="Transcrip_reg_TACO1"/>
    <property type="match status" value="1"/>
</dbReference>
<dbReference type="InterPro" id="IPR017856">
    <property type="entry name" value="Integrase-like_N"/>
</dbReference>
<dbReference type="InterPro" id="IPR048300">
    <property type="entry name" value="TACO1_YebC-like_2nd/3rd_dom"/>
</dbReference>
<dbReference type="InterPro" id="IPR049083">
    <property type="entry name" value="TACO1_YebC_N"/>
</dbReference>
<dbReference type="InterPro" id="IPR002876">
    <property type="entry name" value="Transcrip_reg_TACO1-like"/>
</dbReference>
<dbReference type="InterPro" id="IPR026564">
    <property type="entry name" value="Transcrip_reg_TACO1-like_dom3"/>
</dbReference>
<dbReference type="InterPro" id="IPR029072">
    <property type="entry name" value="YebC-like"/>
</dbReference>
<dbReference type="NCBIfam" id="NF001030">
    <property type="entry name" value="PRK00110.1"/>
    <property type="match status" value="1"/>
</dbReference>
<dbReference type="NCBIfam" id="NF009044">
    <property type="entry name" value="PRK12378.1"/>
    <property type="match status" value="1"/>
</dbReference>
<dbReference type="NCBIfam" id="TIGR01033">
    <property type="entry name" value="YebC/PmpR family DNA-binding transcriptional regulator"/>
    <property type="match status" value="1"/>
</dbReference>
<dbReference type="PANTHER" id="PTHR12532:SF6">
    <property type="entry name" value="TRANSCRIPTIONAL REGULATORY PROTEIN YEBC-RELATED"/>
    <property type="match status" value="1"/>
</dbReference>
<dbReference type="PANTHER" id="PTHR12532">
    <property type="entry name" value="TRANSLATIONAL ACTIVATOR OF CYTOCHROME C OXIDASE 1"/>
    <property type="match status" value="1"/>
</dbReference>
<dbReference type="Pfam" id="PF20772">
    <property type="entry name" value="TACO1_YebC_N"/>
    <property type="match status" value="1"/>
</dbReference>
<dbReference type="Pfam" id="PF01709">
    <property type="entry name" value="Transcrip_reg"/>
    <property type="match status" value="1"/>
</dbReference>
<dbReference type="SUPFAM" id="SSF75625">
    <property type="entry name" value="YebC-like"/>
    <property type="match status" value="1"/>
</dbReference>
<protein>
    <recommendedName>
        <fullName evidence="1">Probable transcriptional regulatory protein NIS_0560</fullName>
    </recommendedName>
</protein>
<accession>A6Q2G5</accession>
<gene>
    <name type="ordered locus">NIS_0560</name>
</gene>
<organism>
    <name type="scientific">Nitratiruptor sp. (strain SB155-2)</name>
    <dbReference type="NCBI Taxonomy" id="387092"/>
    <lineage>
        <taxon>Bacteria</taxon>
        <taxon>Pseudomonadati</taxon>
        <taxon>Campylobacterota</taxon>
        <taxon>Epsilonproteobacteria</taxon>
        <taxon>Nautiliales</taxon>
        <taxon>Nitratiruptoraceae</taxon>
        <taxon>Nitratiruptor</taxon>
    </lineage>
</organism>
<name>Y560_NITSB</name>
<feature type="chain" id="PRO_1000045347" description="Probable transcriptional regulatory protein NIS_0560">
    <location>
        <begin position="1"/>
        <end position="237"/>
    </location>
</feature>